<name>RBSA2_STRCO</name>
<proteinExistence type="inferred from homology"/>
<feature type="chain" id="PRO_0000261111" description="Ribose import ATP-binding protein RbsA 2">
    <location>
        <begin position="1"/>
        <end position="517"/>
    </location>
</feature>
<feature type="domain" description="ABC transporter 1" evidence="1">
    <location>
        <begin position="10"/>
        <end position="245"/>
    </location>
</feature>
<feature type="domain" description="ABC transporter 2" evidence="1">
    <location>
        <begin position="255"/>
        <end position="498"/>
    </location>
</feature>
<feature type="region of interest" description="Disordered" evidence="2">
    <location>
        <begin position="497"/>
        <end position="517"/>
    </location>
</feature>
<feature type="binding site" evidence="1">
    <location>
        <begin position="42"/>
        <end position="49"/>
    </location>
    <ligand>
        <name>ATP</name>
        <dbReference type="ChEBI" id="CHEBI:30616"/>
    </ligand>
</feature>
<dbReference type="EC" id="7.5.2.7" evidence="1"/>
<dbReference type="EMBL" id="AL939113">
    <property type="protein sequence ID" value="CAB66285.1"/>
    <property type="molecule type" value="Genomic_DNA"/>
</dbReference>
<dbReference type="RefSeq" id="NP_626977.1">
    <property type="nucleotide sequence ID" value="NC_003888.3"/>
</dbReference>
<dbReference type="RefSeq" id="WP_011028557.1">
    <property type="nucleotide sequence ID" value="NZ_VNID01000020.1"/>
</dbReference>
<dbReference type="SMR" id="Q9RDI1"/>
<dbReference type="STRING" id="100226.gene:17760353"/>
<dbReference type="PaxDb" id="100226-SCO2746"/>
<dbReference type="KEGG" id="sco:SCO2746"/>
<dbReference type="PATRIC" id="fig|100226.15.peg.2802"/>
<dbReference type="eggNOG" id="COG1129">
    <property type="taxonomic scope" value="Bacteria"/>
</dbReference>
<dbReference type="HOGENOM" id="CLU_000604_92_3_11"/>
<dbReference type="InParanoid" id="Q9RDI1"/>
<dbReference type="OrthoDB" id="8416490at2"/>
<dbReference type="PhylomeDB" id="Q9RDI1"/>
<dbReference type="Proteomes" id="UP000001973">
    <property type="component" value="Chromosome"/>
</dbReference>
<dbReference type="GO" id="GO:0005886">
    <property type="term" value="C:plasma membrane"/>
    <property type="evidence" value="ECO:0007669"/>
    <property type="project" value="UniProtKB-SubCell"/>
</dbReference>
<dbReference type="GO" id="GO:0015611">
    <property type="term" value="F:ABC-type D-ribose transporter activity"/>
    <property type="evidence" value="ECO:0007669"/>
    <property type="project" value="UniProtKB-EC"/>
</dbReference>
<dbReference type="GO" id="GO:0005524">
    <property type="term" value="F:ATP binding"/>
    <property type="evidence" value="ECO:0007669"/>
    <property type="project" value="UniProtKB-KW"/>
</dbReference>
<dbReference type="GO" id="GO:0016887">
    <property type="term" value="F:ATP hydrolysis activity"/>
    <property type="evidence" value="ECO:0007669"/>
    <property type="project" value="InterPro"/>
</dbReference>
<dbReference type="CDD" id="cd03216">
    <property type="entry name" value="ABC_Carb_Monos_I"/>
    <property type="match status" value="1"/>
</dbReference>
<dbReference type="CDD" id="cd03215">
    <property type="entry name" value="ABC_Carb_Monos_II"/>
    <property type="match status" value="1"/>
</dbReference>
<dbReference type="FunFam" id="3.40.50.300:FF:000127">
    <property type="entry name" value="Ribose import ATP-binding protein RbsA"/>
    <property type="match status" value="1"/>
</dbReference>
<dbReference type="Gene3D" id="3.40.50.300">
    <property type="entry name" value="P-loop containing nucleotide triphosphate hydrolases"/>
    <property type="match status" value="2"/>
</dbReference>
<dbReference type="InterPro" id="IPR003593">
    <property type="entry name" value="AAA+_ATPase"/>
</dbReference>
<dbReference type="InterPro" id="IPR050107">
    <property type="entry name" value="ABC_carbohydrate_import_ATPase"/>
</dbReference>
<dbReference type="InterPro" id="IPR003439">
    <property type="entry name" value="ABC_transporter-like_ATP-bd"/>
</dbReference>
<dbReference type="InterPro" id="IPR017871">
    <property type="entry name" value="ABC_transporter-like_CS"/>
</dbReference>
<dbReference type="InterPro" id="IPR027417">
    <property type="entry name" value="P-loop_NTPase"/>
</dbReference>
<dbReference type="PANTHER" id="PTHR43790">
    <property type="entry name" value="CARBOHYDRATE TRANSPORT ATP-BINDING PROTEIN MG119-RELATED"/>
    <property type="match status" value="1"/>
</dbReference>
<dbReference type="PANTHER" id="PTHR43790:SF9">
    <property type="entry name" value="GALACTOFURANOSE TRANSPORTER ATP-BINDING PROTEIN YTFR"/>
    <property type="match status" value="1"/>
</dbReference>
<dbReference type="Pfam" id="PF00005">
    <property type="entry name" value="ABC_tran"/>
    <property type="match status" value="2"/>
</dbReference>
<dbReference type="SMART" id="SM00382">
    <property type="entry name" value="AAA"/>
    <property type="match status" value="2"/>
</dbReference>
<dbReference type="SUPFAM" id="SSF52540">
    <property type="entry name" value="P-loop containing nucleoside triphosphate hydrolases"/>
    <property type="match status" value="2"/>
</dbReference>
<dbReference type="PROSITE" id="PS00211">
    <property type="entry name" value="ABC_TRANSPORTER_1"/>
    <property type="match status" value="1"/>
</dbReference>
<dbReference type="PROSITE" id="PS50893">
    <property type="entry name" value="ABC_TRANSPORTER_2"/>
    <property type="match status" value="2"/>
</dbReference>
<dbReference type="PROSITE" id="PS51254">
    <property type="entry name" value="RBSA"/>
    <property type="match status" value="1"/>
</dbReference>
<accession>Q9RDI1</accession>
<sequence length="517" mass="55117">MSSRSPDELLRIEGIRKTFPGVVALDSVDFDLRRGEVHVLLGENGAGKSTLIKMLSGAYTPDAGRILAGGEEVRIHGAQDSERLGIATIYQEFNLVPDLTVAENIFLGRQPRRLGMIDRKRMDADAEVLLKRVGVNVSPRARVRELGIARLQMVEIAKALSLDARVLIMDEPTAVLTSEEVDKLFAIVRRLREDGVGIVFITHHLEEIAALGDRVTVIRDGRSVGQVPASTPEDELVRLMVGRSIEQQYPRERTDAGEALLKVEGLTRDGVFHDVGFEVRAGEVVGIAGLVGAGRTEVVRAVFGADPYDAGTVHVAGAPLRRHDVNAAMAAGIGLVPEDRKGQGLVLDASVEENLGLVTLRSTARAGLVDLKGQHTAAERIAGQLGVRMAGLGQHVRTLSGGNQQKVVIGKWLLANTKVLILDEPTRGIDVGAKVEIYQLINELTAAGAAVLMISSDLPEVLGMSDRVVVMAQGRVAGELTAEQATQDAVMALAVSTHTGNSPHSGGTDGTEASRGH</sequence>
<protein>
    <recommendedName>
        <fullName evidence="1">Ribose import ATP-binding protein RbsA 2</fullName>
        <ecNumber evidence="1">7.5.2.7</ecNumber>
    </recommendedName>
</protein>
<gene>
    <name evidence="1" type="primary">rbsA2</name>
    <name type="ordered locus">SCO2746</name>
    <name type="ORF">SCC57A.17</name>
</gene>
<reference key="1">
    <citation type="journal article" date="2002" name="Nature">
        <title>Complete genome sequence of the model actinomycete Streptomyces coelicolor A3(2).</title>
        <authorList>
            <person name="Bentley S.D."/>
            <person name="Chater K.F."/>
            <person name="Cerdeno-Tarraga A.-M."/>
            <person name="Challis G.L."/>
            <person name="Thomson N.R."/>
            <person name="James K.D."/>
            <person name="Harris D.E."/>
            <person name="Quail M.A."/>
            <person name="Kieser H."/>
            <person name="Harper D."/>
            <person name="Bateman A."/>
            <person name="Brown S."/>
            <person name="Chandra G."/>
            <person name="Chen C.W."/>
            <person name="Collins M."/>
            <person name="Cronin A."/>
            <person name="Fraser A."/>
            <person name="Goble A."/>
            <person name="Hidalgo J."/>
            <person name="Hornsby T."/>
            <person name="Howarth S."/>
            <person name="Huang C.-H."/>
            <person name="Kieser T."/>
            <person name="Larke L."/>
            <person name="Murphy L.D."/>
            <person name="Oliver K."/>
            <person name="O'Neil S."/>
            <person name="Rabbinowitsch E."/>
            <person name="Rajandream M.A."/>
            <person name="Rutherford K.M."/>
            <person name="Rutter S."/>
            <person name="Seeger K."/>
            <person name="Saunders D."/>
            <person name="Sharp S."/>
            <person name="Squares R."/>
            <person name="Squares S."/>
            <person name="Taylor K."/>
            <person name="Warren T."/>
            <person name="Wietzorrek A."/>
            <person name="Woodward J.R."/>
            <person name="Barrell B.G."/>
            <person name="Parkhill J."/>
            <person name="Hopwood D.A."/>
        </authorList>
    </citation>
    <scope>NUCLEOTIDE SEQUENCE [LARGE SCALE GENOMIC DNA]</scope>
    <source>
        <strain>ATCC BAA-471 / A3(2) / M145</strain>
    </source>
</reference>
<evidence type="ECO:0000255" key="1">
    <source>
        <dbReference type="HAMAP-Rule" id="MF_01716"/>
    </source>
</evidence>
<evidence type="ECO:0000256" key="2">
    <source>
        <dbReference type="SAM" id="MobiDB-lite"/>
    </source>
</evidence>
<organism>
    <name type="scientific">Streptomyces coelicolor (strain ATCC BAA-471 / A3(2) / M145)</name>
    <dbReference type="NCBI Taxonomy" id="100226"/>
    <lineage>
        <taxon>Bacteria</taxon>
        <taxon>Bacillati</taxon>
        <taxon>Actinomycetota</taxon>
        <taxon>Actinomycetes</taxon>
        <taxon>Kitasatosporales</taxon>
        <taxon>Streptomycetaceae</taxon>
        <taxon>Streptomyces</taxon>
        <taxon>Streptomyces albidoflavus group</taxon>
    </lineage>
</organism>
<comment type="function">
    <text evidence="1">Part of the ABC transporter complex RbsABC involved in ribose import. Responsible for energy coupling to the transport system.</text>
</comment>
<comment type="catalytic activity">
    <reaction evidence="1">
        <text>D-ribose(out) + ATP + H2O = D-ribose(in) + ADP + phosphate + H(+)</text>
        <dbReference type="Rhea" id="RHEA:29903"/>
        <dbReference type="ChEBI" id="CHEBI:15377"/>
        <dbReference type="ChEBI" id="CHEBI:15378"/>
        <dbReference type="ChEBI" id="CHEBI:30616"/>
        <dbReference type="ChEBI" id="CHEBI:43474"/>
        <dbReference type="ChEBI" id="CHEBI:47013"/>
        <dbReference type="ChEBI" id="CHEBI:456216"/>
        <dbReference type="EC" id="7.5.2.7"/>
    </reaction>
</comment>
<comment type="subunit">
    <text evidence="1">The complex is composed of an ATP-binding protein (RbsA), two transmembrane proteins (RbsC) and a solute-binding protein (RbsB).</text>
</comment>
<comment type="subcellular location">
    <subcellularLocation>
        <location evidence="1">Cell membrane</location>
        <topology evidence="1">Peripheral membrane protein</topology>
    </subcellularLocation>
</comment>
<comment type="similarity">
    <text evidence="1">Belongs to the ABC transporter superfamily. Ribose importer (TC 3.A.1.2.1) family.</text>
</comment>
<keyword id="KW-0067">ATP-binding</keyword>
<keyword id="KW-1003">Cell membrane</keyword>
<keyword id="KW-0472">Membrane</keyword>
<keyword id="KW-0547">Nucleotide-binding</keyword>
<keyword id="KW-1185">Reference proteome</keyword>
<keyword id="KW-0677">Repeat</keyword>
<keyword id="KW-0762">Sugar transport</keyword>
<keyword id="KW-1278">Translocase</keyword>
<keyword id="KW-0813">Transport</keyword>